<accession>C0H3X2</accession>
<keyword id="KW-1185">Reference proteome</keyword>
<sequence>MIHPPQKNSDEGTLFLSSNLFAPPKIPSNPRTPVLLAFYRIVNITQNHTANKKRNIFSTHSLKAQTKHYKFEISWYIFLHEFSTNCIFMIEFQLS</sequence>
<organism>
    <name type="scientific">Bacillus subtilis (strain 168)</name>
    <dbReference type="NCBI Taxonomy" id="224308"/>
    <lineage>
        <taxon>Bacteria</taxon>
        <taxon>Bacillati</taxon>
        <taxon>Bacillota</taxon>
        <taxon>Bacilli</taxon>
        <taxon>Bacillales</taxon>
        <taxon>Bacillaceae</taxon>
        <taxon>Bacillus</taxon>
    </lineage>
</organism>
<reference key="1">
    <citation type="journal article" date="1997" name="Nature">
        <title>The complete genome sequence of the Gram-positive bacterium Bacillus subtilis.</title>
        <authorList>
            <person name="Kunst F."/>
            <person name="Ogasawara N."/>
            <person name="Moszer I."/>
            <person name="Albertini A.M."/>
            <person name="Alloni G."/>
            <person name="Azevedo V."/>
            <person name="Bertero M.G."/>
            <person name="Bessieres P."/>
            <person name="Bolotin A."/>
            <person name="Borchert S."/>
            <person name="Borriss R."/>
            <person name="Boursier L."/>
            <person name="Brans A."/>
            <person name="Braun M."/>
            <person name="Brignell S.C."/>
            <person name="Bron S."/>
            <person name="Brouillet S."/>
            <person name="Bruschi C.V."/>
            <person name="Caldwell B."/>
            <person name="Capuano V."/>
            <person name="Carter N.M."/>
            <person name="Choi S.-K."/>
            <person name="Codani J.-J."/>
            <person name="Connerton I.F."/>
            <person name="Cummings N.J."/>
            <person name="Daniel R.A."/>
            <person name="Denizot F."/>
            <person name="Devine K.M."/>
            <person name="Duesterhoeft A."/>
            <person name="Ehrlich S.D."/>
            <person name="Emmerson P.T."/>
            <person name="Entian K.-D."/>
            <person name="Errington J."/>
            <person name="Fabret C."/>
            <person name="Ferrari E."/>
            <person name="Foulger D."/>
            <person name="Fritz C."/>
            <person name="Fujita M."/>
            <person name="Fujita Y."/>
            <person name="Fuma S."/>
            <person name="Galizzi A."/>
            <person name="Galleron N."/>
            <person name="Ghim S.-Y."/>
            <person name="Glaser P."/>
            <person name="Goffeau A."/>
            <person name="Golightly E.J."/>
            <person name="Grandi G."/>
            <person name="Guiseppi G."/>
            <person name="Guy B.J."/>
            <person name="Haga K."/>
            <person name="Haiech J."/>
            <person name="Harwood C.R."/>
            <person name="Henaut A."/>
            <person name="Hilbert H."/>
            <person name="Holsappel S."/>
            <person name="Hosono S."/>
            <person name="Hullo M.-F."/>
            <person name="Itaya M."/>
            <person name="Jones L.-M."/>
            <person name="Joris B."/>
            <person name="Karamata D."/>
            <person name="Kasahara Y."/>
            <person name="Klaerr-Blanchard M."/>
            <person name="Klein C."/>
            <person name="Kobayashi Y."/>
            <person name="Koetter P."/>
            <person name="Koningstein G."/>
            <person name="Krogh S."/>
            <person name="Kumano M."/>
            <person name="Kurita K."/>
            <person name="Lapidus A."/>
            <person name="Lardinois S."/>
            <person name="Lauber J."/>
            <person name="Lazarevic V."/>
            <person name="Lee S.-M."/>
            <person name="Levine A."/>
            <person name="Liu H."/>
            <person name="Masuda S."/>
            <person name="Mauel C."/>
            <person name="Medigue C."/>
            <person name="Medina N."/>
            <person name="Mellado R.P."/>
            <person name="Mizuno M."/>
            <person name="Moestl D."/>
            <person name="Nakai S."/>
            <person name="Noback M."/>
            <person name="Noone D."/>
            <person name="O'Reilly M."/>
            <person name="Ogawa K."/>
            <person name="Ogiwara A."/>
            <person name="Oudega B."/>
            <person name="Park S.-H."/>
            <person name="Parro V."/>
            <person name="Pohl T.M."/>
            <person name="Portetelle D."/>
            <person name="Porwollik S."/>
            <person name="Prescott A.M."/>
            <person name="Presecan E."/>
            <person name="Pujic P."/>
            <person name="Purnelle B."/>
            <person name="Rapoport G."/>
            <person name="Rey M."/>
            <person name="Reynolds S."/>
            <person name="Rieger M."/>
            <person name="Rivolta C."/>
            <person name="Rocha E."/>
            <person name="Roche B."/>
            <person name="Rose M."/>
            <person name="Sadaie Y."/>
            <person name="Sato T."/>
            <person name="Scanlan E."/>
            <person name="Schleich S."/>
            <person name="Schroeter R."/>
            <person name="Scoffone F."/>
            <person name="Sekiguchi J."/>
            <person name="Sekowska A."/>
            <person name="Seror S.J."/>
            <person name="Serror P."/>
            <person name="Shin B.-S."/>
            <person name="Soldo B."/>
            <person name="Sorokin A."/>
            <person name="Tacconi E."/>
            <person name="Takagi T."/>
            <person name="Takahashi H."/>
            <person name="Takemaru K."/>
            <person name="Takeuchi M."/>
            <person name="Tamakoshi A."/>
            <person name="Tanaka T."/>
            <person name="Terpstra P."/>
            <person name="Tognoni A."/>
            <person name="Tosato V."/>
            <person name="Uchiyama S."/>
            <person name="Vandenbol M."/>
            <person name="Vannier F."/>
            <person name="Vassarotti A."/>
            <person name="Viari A."/>
            <person name="Wambutt R."/>
            <person name="Wedler E."/>
            <person name="Wedler H."/>
            <person name="Weitzenegger T."/>
            <person name="Winters P."/>
            <person name="Wipat A."/>
            <person name="Yamamoto H."/>
            <person name="Yamane K."/>
            <person name="Yasumoto K."/>
            <person name="Yata K."/>
            <person name="Yoshida K."/>
            <person name="Yoshikawa H.-F."/>
            <person name="Zumstein E."/>
            <person name="Yoshikawa H."/>
            <person name="Danchin A."/>
        </authorList>
    </citation>
    <scope>NUCLEOTIDE SEQUENCE [LARGE SCALE GENOMIC DNA]</scope>
    <source>
        <strain>168</strain>
    </source>
</reference>
<name>YDZX_BACSU</name>
<proteinExistence type="predicted"/>
<gene>
    <name type="primary">ydzX</name>
    <name type="ordered locus">BSU06319</name>
</gene>
<dbReference type="EMBL" id="AL009126">
    <property type="protein sequence ID" value="CAX52577.1"/>
    <property type="molecule type" value="Genomic_DNA"/>
</dbReference>
<dbReference type="RefSeq" id="WP_009966725.1">
    <property type="nucleotide sequence ID" value="NZ_OZ025638.1"/>
</dbReference>
<dbReference type="RefSeq" id="YP_003097690.1">
    <property type="nucleotide sequence ID" value="NC_000964.3"/>
</dbReference>
<dbReference type="STRING" id="224308.BSU06319"/>
<dbReference type="PaxDb" id="224308-BSU06319"/>
<dbReference type="EnsemblBacteria" id="CAX52577">
    <property type="protein sequence ID" value="CAX52577"/>
    <property type="gene ID" value="BSU_06319"/>
</dbReference>
<dbReference type="GeneID" id="8303160"/>
<dbReference type="KEGG" id="bsu:BSU06319"/>
<dbReference type="PATRIC" id="fig|224308.179.peg.685"/>
<dbReference type="InParanoid" id="C0H3X2"/>
<dbReference type="OrthoDB" id="9861316at2"/>
<dbReference type="BioCyc" id="BSUB:BSU06319-MONOMER"/>
<dbReference type="Proteomes" id="UP000001570">
    <property type="component" value="Chromosome"/>
</dbReference>
<feature type="chain" id="PRO_0000379095" description="Uncharacterized protein YdzX">
    <location>
        <begin position="1"/>
        <end position="95"/>
    </location>
</feature>
<protein>
    <recommendedName>
        <fullName>Uncharacterized protein YdzX</fullName>
    </recommendedName>
</protein>